<organism>
    <name type="scientific">Yersinia pestis bv. Antiqua (strain Nepal516)</name>
    <dbReference type="NCBI Taxonomy" id="377628"/>
    <lineage>
        <taxon>Bacteria</taxon>
        <taxon>Pseudomonadati</taxon>
        <taxon>Pseudomonadota</taxon>
        <taxon>Gammaproteobacteria</taxon>
        <taxon>Enterobacterales</taxon>
        <taxon>Yersiniaceae</taxon>
        <taxon>Yersinia</taxon>
    </lineage>
</organism>
<keyword id="KW-0963">Cytoplasm</keyword>
<keyword id="KW-0274">FAD</keyword>
<keyword id="KW-0285">Flavoprotein</keyword>
<keyword id="KW-0520">NAD</keyword>
<keyword id="KW-0521">NADP</keyword>
<keyword id="KW-0560">Oxidoreductase</keyword>
<protein>
    <recommendedName>
        <fullName evidence="1">Soluble pyridine nucleotide transhydrogenase</fullName>
        <shortName evidence="1">STH</shortName>
        <ecNumber evidence="1">1.6.1.1</ecNumber>
    </recommendedName>
    <alternativeName>
        <fullName evidence="1">NAD(P)(+) transhydrogenase [B-specific]</fullName>
    </alternativeName>
</protein>
<dbReference type="EC" id="1.6.1.1" evidence="1"/>
<dbReference type="EMBL" id="CP000305">
    <property type="protein sequence ID" value="ABG16386.1"/>
    <property type="molecule type" value="Genomic_DNA"/>
</dbReference>
<dbReference type="EMBL" id="ACNQ01000019">
    <property type="protein sequence ID" value="EEO74974.1"/>
    <property type="molecule type" value="Genomic_DNA"/>
</dbReference>
<dbReference type="RefSeq" id="WP_002209477.1">
    <property type="nucleotide sequence ID" value="NZ_ACNQ01000019.1"/>
</dbReference>
<dbReference type="SMR" id="Q1CNP4"/>
<dbReference type="GeneID" id="96663600"/>
<dbReference type="KEGG" id="ypn:YPN_0053"/>
<dbReference type="HOGENOM" id="CLU_016755_0_0_6"/>
<dbReference type="Proteomes" id="UP000008936">
    <property type="component" value="Chromosome"/>
</dbReference>
<dbReference type="GO" id="GO:0005829">
    <property type="term" value="C:cytosol"/>
    <property type="evidence" value="ECO:0007669"/>
    <property type="project" value="TreeGrafter"/>
</dbReference>
<dbReference type="GO" id="GO:0004148">
    <property type="term" value="F:dihydrolipoyl dehydrogenase (NADH) activity"/>
    <property type="evidence" value="ECO:0007669"/>
    <property type="project" value="TreeGrafter"/>
</dbReference>
<dbReference type="GO" id="GO:0050660">
    <property type="term" value="F:flavin adenine dinucleotide binding"/>
    <property type="evidence" value="ECO:0007669"/>
    <property type="project" value="TreeGrafter"/>
</dbReference>
<dbReference type="GO" id="GO:0003957">
    <property type="term" value="F:NAD(P)+ transhydrogenase (Si-specific) activity"/>
    <property type="evidence" value="ECO:0007669"/>
    <property type="project" value="UniProtKB-UniRule"/>
</dbReference>
<dbReference type="GO" id="GO:0006103">
    <property type="term" value="P:2-oxoglutarate metabolic process"/>
    <property type="evidence" value="ECO:0007669"/>
    <property type="project" value="TreeGrafter"/>
</dbReference>
<dbReference type="GO" id="GO:0006739">
    <property type="term" value="P:NADP metabolic process"/>
    <property type="evidence" value="ECO:0007669"/>
    <property type="project" value="UniProtKB-UniRule"/>
</dbReference>
<dbReference type="FunFam" id="3.30.390.30:FF:000002">
    <property type="entry name" value="Soluble pyridine nucleotide transhydrogenase"/>
    <property type="match status" value="1"/>
</dbReference>
<dbReference type="FunFam" id="3.50.50.60:FF:000008">
    <property type="entry name" value="Soluble pyridine nucleotide transhydrogenase"/>
    <property type="match status" value="1"/>
</dbReference>
<dbReference type="Gene3D" id="3.30.390.30">
    <property type="match status" value="1"/>
</dbReference>
<dbReference type="Gene3D" id="3.50.50.60">
    <property type="entry name" value="FAD/NAD(P)-binding domain"/>
    <property type="match status" value="2"/>
</dbReference>
<dbReference type="HAMAP" id="MF_00247">
    <property type="entry name" value="SthA"/>
    <property type="match status" value="1"/>
</dbReference>
<dbReference type="InterPro" id="IPR050151">
    <property type="entry name" value="Class-I_Pyr_Nuc-Dis_Oxidored"/>
</dbReference>
<dbReference type="InterPro" id="IPR036188">
    <property type="entry name" value="FAD/NAD-bd_sf"/>
</dbReference>
<dbReference type="InterPro" id="IPR023753">
    <property type="entry name" value="FAD/NAD-binding_dom"/>
</dbReference>
<dbReference type="InterPro" id="IPR016156">
    <property type="entry name" value="FAD/NAD-linked_Rdtase_dimer_sf"/>
</dbReference>
<dbReference type="InterPro" id="IPR001100">
    <property type="entry name" value="Pyr_nuc-diS_OxRdtase"/>
</dbReference>
<dbReference type="InterPro" id="IPR004099">
    <property type="entry name" value="Pyr_nucl-diS_OxRdtase_dimer"/>
</dbReference>
<dbReference type="InterPro" id="IPR022962">
    <property type="entry name" value="STH_gammaproteobact"/>
</dbReference>
<dbReference type="NCBIfam" id="NF003585">
    <property type="entry name" value="PRK05249.1"/>
    <property type="match status" value="1"/>
</dbReference>
<dbReference type="PANTHER" id="PTHR22912">
    <property type="entry name" value="DISULFIDE OXIDOREDUCTASE"/>
    <property type="match status" value="1"/>
</dbReference>
<dbReference type="PANTHER" id="PTHR22912:SF93">
    <property type="entry name" value="SOLUBLE PYRIDINE NUCLEOTIDE TRANSHYDROGENASE"/>
    <property type="match status" value="1"/>
</dbReference>
<dbReference type="Pfam" id="PF07992">
    <property type="entry name" value="Pyr_redox_2"/>
    <property type="match status" value="1"/>
</dbReference>
<dbReference type="Pfam" id="PF02852">
    <property type="entry name" value="Pyr_redox_dim"/>
    <property type="match status" value="1"/>
</dbReference>
<dbReference type="PIRSF" id="PIRSF000350">
    <property type="entry name" value="Mercury_reductase_MerA"/>
    <property type="match status" value="1"/>
</dbReference>
<dbReference type="PRINTS" id="PR00368">
    <property type="entry name" value="FADPNR"/>
</dbReference>
<dbReference type="PRINTS" id="PR00411">
    <property type="entry name" value="PNDRDTASEI"/>
</dbReference>
<dbReference type="SUPFAM" id="SSF51905">
    <property type="entry name" value="FAD/NAD(P)-binding domain"/>
    <property type="match status" value="1"/>
</dbReference>
<dbReference type="SUPFAM" id="SSF55424">
    <property type="entry name" value="FAD/NAD-linked reductases, dimerisation (C-terminal) domain"/>
    <property type="match status" value="1"/>
</dbReference>
<name>STHA_YERPN</name>
<reference key="1">
    <citation type="journal article" date="2006" name="J. Bacteriol.">
        <title>Complete genome sequence of Yersinia pestis strains Antiqua and Nepal516: evidence of gene reduction in an emerging pathogen.</title>
        <authorList>
            <person name="Chain P.S.G."/>
            <person name="Hu P."/>
            <person name="Malfatti S.A."/>
            <person name="Radnedge L."/>
            <person name="Larimer F."/>
            <person name="Vergez L.M."/>
            <person name="Worsham P."/>
            <person name="Chu M.C."/>
            <person name="Andersen G.L."/>
        </authorList>
    </citation>
    <scope>NUCLEOTIDE SEQUENCE [LARGE SCALE GENOMIC DNA]</scope>
    <source>
        <strain>Nepal516</strain>
    </source>
</reference>
<reference key="2">
    <citation type="submission" date="2009-04" db="EMBL/GenBank/DDBJ databases">
        <title>Yersinia pestis Nepal516A whole genome shotgun sequencing project.</title>
        <authorList>
            <person name="Plunkett G. III"/>
            <person name="Anderson B.D."/>
            <person name="Baumler D.J."/>
            <person name="Burland V."/>
            <person name="Cabot E.L."/>
            <person name="Glasner J.D."/>
            <person name="Mau B."/>
            <person name="Neeno-Eckwall E."/>
            <person name="Perna N.T."/>
            <person name="Munk A.C."/>
            <person name="Tapia R."/>
            <person name="Green L.D."/>
            <person name="Rogers Y.C."/>
            <person name="Detter J.C."/>
            <person name="Bruce D.C."/>
            <person name="Brettin T.S."/>
        </authorList>
    </citation>
    <scope>NUCLEOTIDE SEQUENCE [LARGE SCALE GENOMIC DNA]</scope>
    <source>
        <strain>Nepal516</strain>
    </source>
</reference>
<accession>Q1CNP4</accession>
<accession>D1Q371</accession>
<feature type="chain" id="PRO_0000260247" description="Soluble pyridine nucleotide transhydrogenase">
    <location>
        <begin position="1"/>
        <end position="466"/>
    </location>
</feature>
<feature type="binding site" evidence="1">
    <location>
        <begin position="36"/>
        <end position="45"/>
    </location>
    <ligand>
        <name>FAD</name>
        <dbReference type="ChEBI" id="CHEBI:57692"/>
    </ligand>
</feature>
<proteinExistence type="inferred from homology"/>
<comment type="function">
    <text evidence="1">Conversion of NADPH, generated by peripheral catabolic pathways, to NADH, which can enter the respiratory chain for energy generation.</text>
</comment>
<comment type="catalytic activity">
    <reaction evidence="1">
        <text>NAD(+) + NADPH = NADH + NADP(+)</text>
        <dbReference type="Rhea" id="RHEA:11692"/>
        <dbReference type="ChEBI" id="CHEBI:57540"/>
        <dbReference type="ChEBI" id="CHEBI:57783"/>
        <dbReference type="ChEBI" id="CHEBI:57945"/>
        <dbReference type="ChEBI" id="CHEBI:58349"/>
        <dbReference type="EC" id="1.6.1.1"/>
    </reaction>
</comment>
<comment type="cofactor">
    <cofactor evidence="1">
        <name>FAD</name>
        <dbReference type="ChEBI" id="CHEBI:57692"/>
    </cofactor>
    <text evidence="1">Binds 1 FAD per subunit.</text>
</comment>
<comment type="subcellular location">
    <subcellularLocation>
        <location evidence="1">Cytoplasm</location>
    </subcellularLocation>
</comment>
<comment type="similarity">
    <text evidence="1">Belongs to the class-I pyridine nucleotide-disulfide oxidoreductase family.</text>
</comment>
<gene>
    <name evidence="1" type="primary">sthA</name>
    <name evidence="1" type="synonym">udhA</name>
    <name type="ordered locus">YPN_0053</name>
    <name type="ORF">YP516_4591</name>
</gene>
<sequence length="466" mass="51382">MQQHFHFDAIVIGSGPGGEGAAMGLVKQGARVAVIERYNNVGGGCTHWGTIPSKALRHAVSRIIEFNQNPLYSDNARTIKSSFADILNHADRVINQQTRMRQGFYDRNHCHMFSGDASFIDANTVNVRYADGTSDTLQADNIVIATGSRPYRPVNVDFNHERIYDSDTILQLSHEPQHVIIYGAGVIGCEYASIFRGLSVKVDLINTRDRLLAFLDQEMSDALSYHFWNNGVVIRHNEEFEQIEGTTDGVIVHLKSGKKVKADCLLYANGRTGNTSGLGLENIGLEADSRGLLKVNSMYQTALSHVYAVGDVIGYPSLASAAYDQGRIAAQAMIKGEANVHLIEDIPTGIYTIPEISSVGKTEQELTAMKVPYEVGRAQFKHLARAQIVGMDTGSLKILFHRETKQILGIHCFGERAAEIIHIGQAIMEQKGEGNTLEYFVNTTFNYPTMAEAYRVAALNGLNRLF</sequence>
<evidence type="ECO:0000255" key="1">
    <source>
        <dbReference type="HAMAP-Rule" id="MF_00247"/>
    </source>
</evidence>